<dbReference type="EC" id="3.5.99.6" evidence="1"/>
<dbReference type="EMBL" id="AE016830">
    <property type="protein sequence ID" value="AAO80321.1"/>
    <property type="molecule type" value="Genomic_DNA"/>
</dbReference>
<dbReference type="RefSeq" id="NP_814250.1">
    <property type="nucleotide sequence ID" value="NC_004668.1"/>
</dbReference>
<dbReference type="RefSeq" id="WP_002355352.1">
    <property type="nucleotide sequence ID" value="NZ_KE136524.1"/>
</dbReference>
<dbReference type="SMR" id="P59687"/>
<dbReference type="STRING" id="226185.EF_0466"/>
<dbReference type="EnsemblBacteria" id="AAO80321">
    <property type="protein sequence ID" value="AAO80321"/>
    <property type="gene ID" value="EF_0466"/>
</dbReference>
<dbReference type="GeneID" id="60892907"/>
<dbReference type="KEGG" id="efa:EF0466"/>
<dbReference type="PATRIC" id="fig|226185.45.peg.2869"/>
<dbReference type="eggNOG" id="COG0363">
    <property type="taxonomic scope" value="Bacteria"/>
</dbReference>
<dbReference type="HOGENOM" id="CLU_049611_1_0_9"/>
<dbReference type="UniPathway" id="UPA00629">
    <property type="reaction ID" value="UER00684"/>
</dbReference>
<dbReference type="Proteomes" id="UP000001415">
    <property type="component" value="Chromosome"/>
</dbReference>
<dbReference type="GO" id="GO:0005737">
    <property type="term" value="C:cytoplasm"/>
    <property type="evidence" value="ECO:0007669"/>
    <property type="project" value="TreeGrafter"/>
</dbReference>
<dbReference type="GO" id="GO:0004342">
    <property type="term" value="F:glucosamine-6-phosphate deaminase activity"/>
    <property type="evidence" value="ECO:0007669"/>
    <property type="project" value="UniProtKB-UniRule"/>
</dbReference>
<dbReference type="GO" id="GO:0042802">
    <property type="term" value="F:identical protein binding"/>
    <property type="evidence" value="ECO:0007669"/>
    <property type="project" value="TreeGrafter"/>
</dbReference>
<dbReference type="GO" id="GO:0005975">
    <property type="term" value="P:carbohydrate metabolic process"/>
    <property type="evidence" value="ECO:0007669"/>
    <property type="project" value="InterPro"/>
</dbReference>
<dbReference type="GO" id="GO:0006043">
    <property type="term" value="P:glucosamine catabolic process"/>
    <property type="evidence" value="ECO:0007669"/>
    <property type="project" value="TreeGrafter"/>
</dbReference>
<dbReference type="GO" id="GO:0006046">
    <property type="term" value="P:N-acetylglucosamine catabolic process"/>
    <property type="evidence" value="ECO:0007669"/>
    <property type="project" value="TreeGrafter"/>
</dbReference>
<dbReference type="GO" id="GO:0019262">
    <property type="term" value="P:N-acetylneuraminate catabolic process"/>
    <property type="evidence" value="ECO:0007669"/>
    <property type="project" value="UniProtKB-UniRule"/>
</dbReference>
<dbReference type="CDD" id="cd01399">
    <property type="entry name" value="GlcN6P_deaminase"/>
    <property type="match status" value="1"/>
</dbReference>
<dbReference type="FunFam" id="3.40.50.1360:FF:000003">
    <property type="entry name" value="Glucosamine-6-phosphate deaminase"/>
    <property type="match status" value="1"/>
</dbReference>
<dbReference type="Gene3D" id="3.40.50.1360">
    <property type="match status" value="1"/>
</dbReference>
<dbReference type="HAMAP" id="MF_01241">
    <property type="entry name" value="GlcN6P_deamin"/>
    <property type="match status" value="1"/>
</dbReference>
<dbReference type="InterPro" id="IPR006148">
    <property type="entry name" value="Glc/Gal-6P_isomerase"/>
</dbReference>
<dbReference type="InterPro" id="IPR004547">
    <property type="entry name" value="Glucosamine6P_isomerase"/>
</dbReference>
<dbReference type="InterPro" id="IPR018321">
    <property type="entry name" value="Glucosamine6P_isomerase_CS"/>
</dbReference>
<dbReference type="InterPro" id="IPR037171">
    <property type="entry name" value="NagB/RpiA_transferase-like"/>
</dbReference>
<dbReference type="NCBIfam" id="TIGR00502">
    <property type="entry name" value="nagB"/>
    <property type="match status" value="1"/>
</dbReference>
<dbReference type="PANTHER" id="PTHR11280">
    <property type="entry name" value="GLUCOSAMINE-6-PHOSPHATE ISOMERASE"/>
    <property type="match status" value="1"/>
</dbReference>
<dbReference type="PANTHER" id="PTHR11280:SF5">
    <property type="entry name" value="GLUCOSAMINE-6-PHOSPHATE ISOMERASE"/>
    <property type="match status" value="1"/>
</dbReference>
<dbReference type="Pfam" id="PF01182">
    <property type="entry name" value="Glucosamine_iso"/>
    <property type="match status" value="1"/>
</dbReference>
<dbReference type="SUPFAM" id="SSF100950">
    <property type="entry name" value="NagB/RpiA/CoA transferase-like"/>
    <property type="match status" value="1"/>
</dbReference>
<dbReference type="PROSITE" id="PS01161">
    <property type="entry name" value="GLC_GALNAC_ISOMERASE"/>
    <property type="match status" value="1"/>
</dbReference>
<name>NAGB_ENTFA</name>
<keyword id="KW-0119">Carbohydrate metabolism</keyword>
<keyword id="KW-0378">Hydrolase</keyword>
<keyword id="KW-1185">Reference proteome</keyword>
<protein>
    <recommendedName>
        <fullName evidence="1">Glucosamine-6-phosphate deaminase</fullName>
        <ecNumber evidence="1">3.5.99.6</ecNumber>
    </recommendedName>
    <alternativeName>
        <fullName evidence="1">GlcN6P deaminase</fullName>
        <shortName evidence="1">GNPDA</shortName>
    </alternativeName>
    <alternativeName>
        <fullName evidence="1">Glucosamine-6-phosphate isomerase</fullName>
    </alternativeName>
</protein>
<accession>P59687</accession>
<feature type="chain" id="PRO_0000160146" description="Glucosamine-6-phosphate deaminase">
    <location>
        <begin position="1"/>
        <end position="233"/>
    </location>
</feature>
<feature type="active site" description="Proton acceptor; for enolization step" evidence="1">
    <location>
        <position position="62"/>
    </location>
</feature>
<feature type="active site" description="For ring-opening step" evidence="1">
    <location>
        <position position="128"/>
    </location>
</feature>
<feature type="active site" description="Proton acceptor; for ring-opening step" evidence="1">
    <location>
        <position position="130"/>
    </location>
</feature>
<feature type="active site" description="For ring-opening step" evidence="1">
    <location>
        <position position="135"/>
    </location>
</feature>
<reference key="1">
    <citation type="journal article" date="2003" name="Science">
        <title>Role of mobile DNA in the evolution of vancomycin-resistant Enterococcus faecalis.</title>
        <authorList>
            <person name="Paulsen I.T."/>
            <person name="Banerjei L."/>
            <person name="Myers G.S.A."/>
            <person name="Nelson K.E."/>
            <person name="Seshadri R."/>
            <person name="Read T.D."/>
            <person name="Fouts D.E."/>
            <person name="Eisen J.A."/>
            <person name="Gill S.R."/>
            <person name="Heidelberg J.F."/>
            <person name="Tettelin H."/>
            <person name="Dodson R.J."/>
            <person name="Umayam L.A."/>
            <person name="Brinkac L.M."/>
            <person name="Beanan M.J."/>
            <person name="Daugherty S.C."/>
            <person name="DeBoy R.T."/>
            <person name="Durkin S.A."/>
            <person name="Kolonay J.F."/>
            <person name="Madupu R."/>
            <person name="Nelson W.C."/>
            <person name="Vamathevan J.J."/>
            <person name="Tran B."/>
            <person name="Upton J."/>
            <person name="Hansen T."/>
            <person name="Shetty J."/>
            <person name="Khouri H.M."/>
            <person name="Utterback T.R."/>
            <person name="Radune D."/>
            <person name="Ketchum K.A."/>
            <person name="Dougherty B.A."/>
            <person name="Fraser C.M."/>
        </authorList>
    </citation>
    <scope>NUCLEOTIDE SEQUENCE [LARGE SCALE GENOMIC DNA]</scope>
    <source>
        <strain>ATCC 700802 / V583</strain>
    </source>
</reference>
<sequence length="233" mass="25306">MQIIRVANAEEGGKKAFELIKEGMNNGAKVLGLATGSTPETLYKEMTASDVDFTEMTSVNLDEYVGLGGEDEQSYRYFMNKHLFDKKPFKETFVPNGKAEDLDAASAEYEKIIDAHPVDIQILGIGQNGHIGFNEPGTPLDSLTHVVELTESTINANKRYFDKVEDVPTRAVSMGIGSIMKGKKMILMAYGEAKAEAIKGMIDGPVTTDMPASALQNHQDVVVIIDDAAASKL</sequence>
<gene>
    <name evidence="1" type="primary">nagB</name>
    <name type="ordered locus">EF_0466</name>
</gene>
<organism>
    <name type="scientific">Enterococcus faecalis (strain ATCC 700802 / V583)</name>
    <dbReference type="NCBI Taxonomy" id="226185"/>
    <lineage>
        <taxon>Bacteria</taxon>
        <taxon>Bacillati</taxon>
        <taxon>Bacillota</taxon>
        <taxon>Bacilli</taxon>
        <taxon>Lactobacillales</taxon>
        <taxon>Enterococcaceae</taxon>
        <taxon>Enterococcus</taxon>
    </lineage>
</organism>
<comment type="function">
    <text evidence="1">Catalyzes the reversible isomerization-deamination of glucosamine 6-phosphate (GlcN6P) to form fructose 6-phosphate (Fru6P) and ammonium ion.</text>
</comment>
<comment type="catalytic activity">
    <reaction evidence="1">
        <text>alpha-D-glucosamine 6-phosphate + H2O = beta-D-fructose 6-phosphate + NH4(+)</text>
        <dbReference type="Rhea" id="RHEA:12172"/>
        <dbReference type="ChEBI" id="CHEBI:15377"/>
        <dbReference type="ChEBI" id="CHEBI:28938"/>
        <dbReference type="ChEBI" id="CHEBI:57634"/>
        <dbReference type="ChEBI" id="CHEBI:75989"/>
        <dbReference type="EC" id="3.5.99.6"/>
    </reaction>
</comment>
<comment type="pathway">
    <text evidence="1">Amino-sugar metabolism; N-acetylneuraminate degradation; D-fructose 6-phosphate from N-acetylneuraminate: step 5/5.</text>
</comment>
<comment type="similarity">
    <text evidence="1">Belongs to the glucosamine/galactosamine-6-phosphate isomerase family. NagB subfamily.</text>
</comment>
<proteinExistence type="inferred from homology"/>
<evidence type="ECO:0000255" key="1">
    <source>
        <dbReference type="HAMAP-Rule" id="MF_01241"/>
    </source>
</evidence>